<sequence>MSAPDVRLTAWVHGWVQGVGFRWWTRCRALELGLTGYAANHADGRVLVVAQGPRAACQKLLQLLQGDTTPGRVAKVVADWSQSTEQITGFSER</sequence>
<organism>
    <name type="scientific">Mycobacterium bovis (strain ATCC BAA-935 / AF2122/97)</name>
    <dbReference type="NCBI Taxonomy" id="233413"/>
    <lineage>
        <taxon>Bacteria</taxon>
        <taxon>Bacillati</taxon>
        <taxon>Actinomycetota</taxon>
        <taxon>Actinomycetes</taxon>
        <taxon>Mycobacteriales</taxon>
        <taxon>Mycobacteriaceae</taxon>
        <taxon>Mycobacterium</taxon>
        <taxon>Mycobacterium tuberculosis complex</taxon>
    </lineage>
</organism>
<evidence type="ECO:0000255" key="1">
    <source>
        <dbReference type="PROSITE-ProRule" id="PRU00520"/>
    </source>
</evidence>
<evidence type="ECO:0000305" key="2"/>
<proteinExistence type="inferred from homology"/>
<reference key="1">
    <citation type="journal article" date="2003" name="Proc. Natl. Acad. Sci. U.S.A.">
        <title>The complete genome sequence of Mycobacterium bovis.</title>
        <authorList>
            <person name="Garnier T."/>
            <person name="Eiglmeier K."/>
            <person name="Camus J.-C."/>
            <person name="Medina N."/>
            <person name="Mansoor H."/>
            <person name="Pryor M."/>
            <person name="Duthoy S."/>
            <person name="Grondin S."/>
            <person name="Lacroix C."/>
            <person name="Monsempe C."/>
            <person name="Simon S."/>
            <person name="Harris B."/>
            <person name="Atkin R."/>
            <person name="Doggett J."/>
            <person name="Mayes R."/>
            <person name="Keating L."/>
            <person name="Wheeler P.R."/>
            <person name="Parkhill J."/>
            <person name="Barrell B.G."/>
            <person name="Cole S.T."/>
            <person name="Gordon S.V."/>
            <person name="Hewinson R.G."/>
        </authorList>
    </citation>
    <scope>NUCLEOTIDE SEQUENCE [LARGE SCALE GENOMIC DNA]</scope>
    <source>
        <strain>ATCC BAA-935 / AF2122/97</strain>
    </source>
</reference>
<reference key="2">
    <citation type="journal article" date="2017" name="Genome Announc.">
        <title>Updated reference genome sequence and annotation of Mycobacterium bovis AF2122/97.</title>
        <authorList>
            <person name="Malone K.M."/>
            <person name="Farrell D."/>
            <person name="Stuber T.P."/>
            <person name="Schubert O.T."/>
            <person name="Aebersold R."/>
            <person name="Robbe-Austerman S."/>
            <person name="Gordon S.V."/>
        </authorList>
    </citation>
    <scope>NUCLEOTIDE SEQUENCE [LARGE SCALE GENOMIC DNA]</scope>
    <scope>GENOME REANNOTATION</scope>
    <source>
        <strain>ATCC BAA-935 / AF2122/97</strain>
    </source>
</reference>
<gene>
    <name type="primary">acyP</name>
    <name type="ordered locus">BQ2027_MB2947C</name>
</gene>
<accession>P69418</accession>
<accession>A0A1R3Y303</accession>
<accession>P56543</accession>
<accession>X2BM09</accession>
<name>ACYP_MYCBO</name>
<feature type="chain" id="PRO_0000158555" description="Acylphosphatase">
    <location>
        <begin position="1"/>
        <end position="93"/>
    </location>
</feature>
<feature type="domain" description="Acylphosphatase-like" evidence="1">
    <location>
        <begin position="7"/>
        <end position="93"/>
    </location>
</feature>
<feature type="active site" evidence="1">
    <location>
        <position position="22"/>
    </location>
</feature>
<feature type="active site" evidence="1">
    <location>
        <position position="40"/>
    </location>
</feature>
<protein>
    <recommendedName>
        <fullName>Acylphosphatase</fullName>
        <ecNumber>3.6.1.7</ecNumber>
    </recommendedName>
    <alternativeName>
        <fullName>Acylphosphate phosphohydrolase</fullName>
    </alternativeName>
</protein>
<comment type="catalytic activity">
    <reaction>
        <text>an acyl phosphate + H2O = a carboxylate + phosphate + H(+)</text>
        <dbReference type="Rhea" id="RHEA:14965"/>
        <dbReference type="ChEBI" id="CHEBI:15377"/>
        <dbReference type="ChEBI" id="CHEBI:15378"/>
        <dbReference type="ChEBI" id="CHEBI:29067"/>
        <dbReference type="ChEBI" id="CHEBI:43474"/>
        <dbReference type="ChEBI" id="CHEBI:59918"/>
        <dbReference type="EC" id="3.6.1.7"/>
    </reaction>
</comment>
<comment type="similarity">
    <text evidence="2">Belongs to the acylphosphatase family.</text>
</comment>
<keyword id="KW-0378">Hydrolase</keyword>
<keyword id="KW-1185">Reference proteome</keyword>
<dbReference type="EC" id="3.6.1.7"/>
<dbReference type="EMBL" id="LT708304">
    <property type="protein sequence ID" value="SIU01568.1"/>
    <property type="molecule type" value="Genomic_DNA"/>
</dbReference>
<dbReference type="RefSeq" id="NP_856592.1">
    <property type="nucleotide sequence ID" value="NC_002945.3"/>
</dbReference>
<dbReference type="RefSeq" id="WP_003414811.1">
    <property type="nucleotide sequence ID" value="NC_002945.4"/>
</dbReference>
<dbReference type="SMR" id="P69418"/>
<dbReference type="KEGG" id="mbo:BQ2027_MB2947C"/>
<dbReference type="PATRIC" id="fig|233413.5.peg.3234"/>
<dbReference type="Proteomes" id="UP000001419">
    <property type="component" value="Chromosome"/>
</dbReference>
<dbReference type="GO" id="GO:0003998">
    <property type="term" value="F:acylphosphatase activity"/>
    <property type="evidence" value="ECO:0007669"/>
    <property type="project" value="UniProtKB-EC"/>
</dbReference>
<dbReference type="Gene3D" id="3.30.70.100">
    <property type="match status" value="1"/>
</dbReference>
<dbReference type="InterPro" id="IPR020456">
    <property type="entry name" value="Acylphosphatase"/>
</dbReference>
<dbReference type="InterPro" id="IPR001792">
    <property type="entry name" value="Acylphosphatase-like_dom"/>
</dbReference>
<dbReference type="InterPro" id="IPR036046">
    <property type="entry name" value="Acylphosphatase-like_dom_sf"/>
</dbReference>
<dbReference type="InterPro" id="IPR017968">
    <property type="entry name" value="Acylphosphatase_CS"/>
</dbReference>
<dbReference type="NCBIfam" id="NF010997">
    <property type="entry name" value="PRK14422.1"/>
    <property type="match status" value="1"/>
</dbReference>
<dbReference type="PANTHER" id="PTHR47268">
    <property type="entry name" value="ACYLPHOSPHATASE"/>
    <property type="match status" value="1"/>
</dbReference>
<dbReference type="PANTHER" id="PTHR47268:SF4">
    <property type="entry name" value="ACYLPHOSPHATASE"/>
    <property type="match status" value="1"/>
</dbReference>
<dbReference type="Pfam" id="PF00708">
    <property type="entry name" value="Acylphosphatase"/>
    <property type="match status" value="1"/>
</dbReference>
<dbReference type="SUPFAM" id="SSF54975">
    <property type="entry name" value="Acylphosphatase/BLUF domain-like"/>
    <property type="match status" value="1"/>
</dbReference>
<dbReference type="PROSITE" id="PS00150">
    <property type="entry name" value="ACYLPHOSPHATASE_1"/>
    <property type="match status" value="1"/>
</dbReference>
<dbReference type="PROSITE" id="PS00151">
    <property type="entry name" value="ACYLPHOSPHATASE_2"/>
    <property type="match status" value="1"/>
</dbReference>
<dbReference type="PROSITE" id="PS51160">
    <property type="entry name" value="ACYLPHOSPHATASE_3"/>
    <property type="match status" value="1"/>
</dbReference>